<sequence>MSPIKHKTIRMIKDKIFLFIVGALTLLAILPLFHIIISIVEKGLPIIMERGLTFITGTLSEGGIGPAIVGTLMLTFLATLIGLPLAFLAGAYAYEFPNSFIGRATKMLLQIMLEFPTILVGTFVMGMLVVPMGTFSALAGALALALILTPYVAVYTEEAMAEVPKIYKEGGYALGCTRAQVIFKVITKMAKKGILTGILIGMAKVAGETAPLLFTAGGLYEVYPTNPLEPVGAIPLLIYTLVQSPSIEDHQMAWGAALVMLIIFLAIFVPIRYALKDDIKL</sequence>
<feature type="chain" id="PRO_0000060206" description="Probable phosphate transport system permease protein PstA">
    <location>
        <begin position="1"/>
        <end position="281"/>
    </location>
</feature>
<feature type="transmembrane region" description="Helical" evidence="2">
    <location>
        <begin position="16"/>
        <end position="36"/>
    </location>
</feature>
<feature type="transmembrane region" description="Helical" evidence="2">
    <location>
        <begin position="68"/>
        <end position="88"/>
    </location>
</feature>
<feature type="transmembrane region" description="Helical" evidence="2">
    <location>
        <begin position="107"/>
        <end position="127"/>
    </location>
</feature>
<feature type="transmembrane region" description="Helical" evidence="2">
    <location>
        <begin position="128"/>
        <end position="148"/>
    </location>
</feature>
<feature type="transmembrane region" description="Helical" evidence="2">
    <location>
        <begin position="194"/>
        <end position="214"/>
    </location>
</feature>
<feature type="transmembrane region" description="Helical" evidence="2">
    <location>
        <begin position="251"/>
        <end position="271"/>
    </location>
</feature>
<feature type="domain" description="ABC transmembrane type-1" evidence="2">
    <location>
        <begin position="68"/>
        <end position="271"/>
    </location>
</feature>
<accession>Q58419</accession>
<evidence type="ECO:0000250" key="1"/>
<evidence type="ECO:0000255" key="2">
    <source>
        <dbReference type="PROSITE-ProRule" id="PRU00441"/>
    </source>
</evidence>
<evidence type="ECO:0000305" key="3"/>
<name>PSTA_METJA</name>
<gene>
    <name type="primary">pstA</name>
    <name type="ordered locus">MJ1013</name>
</gene>
<organism>
    <name type="scientific">Methanocaldococcus jannaschii (strain ATCC 43067 / DSM 2661 / JAL-1 / JCM 10045 / NBRC 100440)</name>
    <name type="common">Methanococcus jannaschii</name>
    <dbReference type="NCBI Taxonomy" id="243232"/>
    <lineage>
        <taxon>Archaea</taxon>
        <taxon>Methanobacteriati</taxon>
        <taxon>Methanobacteriota</taxon>
        <taxon>Methanomada group</taxon>
        <taxon>Methanococci</taxon>
        <taxon>Methanococcales</taxon>
        <taxon>Methanocaldococcaceae</taxon>
        <taxon>Methanocaldococcus</taxon>
    </lineage>
</organism>
<dbReference type="EMBL" id="L77117">
    <property type="protein sequence ID" value="AAB99017.1"/>
    <property type="molecule type" value="Genomic_DNA"/>
</dbReference>
<dbReference type="PIR" id="D64426">
    <property type="entry name" value="D64426"/>
</dbReference>
<dbReference type="RefSeq" id="WP_010870526.1">
    <property type="nucleotide sequence ID" value="NC_000909.1"/>
</dbReference>
<dbReference type="SMR" id="Q58419"/>
<dbReference type="FunCoup" id="Q58419">
    <property type="interactions" value="2"/>
</dbReference>
<dbReference type="STRING" id="243232.MJ_1013"/>
<dbReference type="PaxDb" id="243232-MJ_1013"/>
<dbReference type="EnsemblBacteria" id="AAB99017">
    <property type="protein sequence ID" value="AAB99017"/>
    <property type="gene ID" value="MJ_1013"/>
</dbReference>
<dbReference type="GeneID" id="1451910"/>
<dbReference type="KEGG" id="mja:MJ_1013"/>
<dbReference type="eggNOG" id="arCOG00168">
    <property type="taxonomic scope" value="Archaea"/>
</dbReference>
<dbReference type="HOGENOM" id="CLU_033621_2_0_2"/>
<dbReference type="InParanoid" id="Q58419"/>
<dbReference type="OrthoDB" id="11402at2157"/>
<dbReference type="PhylomeDB" id="Q58419"/>
<dbReference type="Proteomes" id="UP000000805">
    <property type="component" value="Chromosome"/>
</dbReference>
<dbReference type="GO" id="GO:0005886">
    <property type="term" value="C:plasma membrane"/>
    <property type="evidence" value="ECO:0007669"/>
    <property type="project" value="UniProtKB-SubCell"/>
</dbReference>
<dbReference type="GO" id="GO:0005315">
    <property type="term" value="F:phosphate transmembrane transporter activity"/>
    <property type="evidence" value="ECO:0007669"/>
    <property type="project" value="InterPro"/>
</dbReference>
<dbReference type="GO" id="GO:0035435">
    <property type="term" value="P:phosphate ion transmembrane transport"/>
    <property type="evidence" value="ECO:0007669"/>
    <property type="project" value="InterPro"/>
</dbReference>
<dbReference type="CDD" id="cd06261">
    <property type="entry name" value="TM_PBP2"/>
    <property type="match status" value="1"/>
</dbReference>
<dbReference type="Gene3D" id="1.10.3720.10">
    <property type="entry name" value="MetI-like"/>
    <property type="match status" value="1"/>
</dbReference>
<dbReference type="InterPro" id="IPR000515">
    <property type="entry name" value="MetI-like"/>
</dbReference>
<dbReference type="InterPro" id="IPR035906">
    <property type="entry name" value="MetI-like_sf"/>
</dbReference>
<dbReference type="InterPro" id="IPR005672">
    <property type="entry name" value="Phosphate_PstA"/>
</dbReference>
<dbReference type="InterPro" id="IPR051408">
    <property type="entry name" value="Phosphate_transprt_permease"/>
</dbReference>
<dbReference type="NCBIfam" id="TIGR00974">
    <property type="entry name" value="3a0107s02c"/>
    <property type="match status" value="1"/>
</dbReference>
<dbReference type="PANTHER" id="PTHR42922">
    <property type="entry name" value="PHOSPHATE TRANSPORT SYSTEM PERMEASE PROTEIN PSTA"/>
    <property type="match status" value="1"/>
</dbReference>
<dbReference type="PANTHER" id="PTHR42922:SF1">
    <property type="entry name" value="PHOSPHATE TRANSPORT SYSTEM PERMEASE PROTEIN PSTA"/>
    <property type="match status" value="1"/>
</dbReference>
<dbReference type="Pfam" id="PF00528">
    <property type="entry name" value="BPD_transp_1"/>
    <property type="match status" value="1"/>
</dbReference>
<dbReference type="SUPFAM" id="SSF161098">
    <property type="entry name" value="MetI-like"/>
    <property type="match status" value="1"/>
</dbReference>
<dbReference type="PROSITE" id="PS50928">
    <property type="entry name" value="ABC_TM1"/>
    <property type="match status" value="1"/>
</dbReference>
<reference key="1">
    <citation type="journal article" date="1996" name="Science">
        <title>Complete genome sequence of the methanogenic archaeon, Methanococcus jannaschii.</title>
        <authorList>
            <person name="Bult C.J."/>
            <person name="White O."/>
            <person name="Olsen G.J."/>
            <person name="Zhou L."/>
            <person name="Fleischmann R.D."/>
            <person name="Sutton G.G."/>
            <person name="Blake J.A."/>
            <person name="FitzGerald L.M."/>
            <person name="Clayton R.A."/>
            <person name="Gocayne J.D."/>
            <person name="Kerlavage A.R."/>
            <person name="Dougherty B.A."/>
            <person name="Tomb J.-F."/>
            <person name="Adams M.D."/>
            <person name="Reich C.I."/>
            <person name="Overbeek R."/>
            <person name="Kirkness E.F."/>
            <person name="Weinstock K.G."/>
            <person name="Merrick J.M."/>
            <person name="Glodek A."/>
            <person name="Scott J.L."/>
            <person name="Geoghagen N.S.M."/>
            <person name="Weidman J.F."/>
            <person name="Fuhrmann J.L."/>
            <person name="Nguyen D."/>
            <person name="Utterback T.R."/>
            <person name="Kelley J.M."/>
            <person name="Peterson J.D."/>
            <person name="Sadow P.W."/>
            <person name="Hanna M.C."/>
            <person name="Cotton M.D."/>
            <person name="Roberts K.M."/>
            <person name="Hurst M.A."/>
            <person name="Kaine B.P."/>
            <person name="Borodovsky M."/>
            <person name="Klenk H.-P."/>
            <person name="Fraser C.M."/>
            <person name="Smith H.O."/>
            <person name="Woese C.R."/>
            <person name="Venter J.C."/>
        </authorList>
    </citation>
    <scope>NUCLEOTIDE SEQUENCE [LARGE SCALE GENOMIC DNA]</scope>
    <source>
        <strain>ATCC 43067 / DSM 2661 / JAL-1 / JCM 10045 / NBRC 100440</strain>
    </source>
</reference>
<proteinExistence type="inferred from homology"/>
<comment type="function">
    <text evidence="1">Part of the binding-protein-dependent transport system for phosphate; probably responsible for the translocation of the substrate across the membrane.</text>
</comment>
<comment type="subcellular location">
    <subcellularLocation>
        <location evidence="3">Cell membrane</location>
        <topology evidence="2">Multi-pass membrane protein</topology>
    </subcellularLocation>
</comment>
<comment type="similarity">
    <text evidence="3">Belongs to the binding-protein-dependent transport system permease family. CysTW subfamily.</text>
</comment>
<protein>
    <recommendedName>
        <fullName>Probable phosphate transport system permease protein PstA</fullName>
    </recommendedName>
</protein>
<keyword id="KW-1003">Cell membrane</keyword>
<keyword id="KW-0472">Membrane</keyword>
<keyword id="KW-0592">Phosphate transport</keyword>
<keyword id="KW-1185">Reference proteome</keyword>
<keyword id="KW-0812">Transmembrane</keyword>
<keyword id="KW-1133">Transmembrane helix</keyword>
<keyword id="KW-0813">Transport</keyword>